<protein>
    <recommendedName>
        <fullName evidence="1">Glycerol-3-phosphate acyltransferase</fullName>
        <shortName evidence="1">GPAT</shortName>
        <ecNumber evidence="1">2.3.1.15</ecNumber>
    </recommendedName>
</protein>
<evidence type="ECO:0000255" key="1">
    <source>
        <dbReference type="HAMAP-Rule" id="MF_00393"/>
    </source>
</evidence>
<gene>
    <name evidence="1" type="primary">plsB</name>
    <name type="ordered locus">PSEEN4236</name>
</gene>
<accession>Q1I610</accession>
<reference key="1">
    <citation type="journal article" date="2006" name="Nat. Biotechnol.">
        <title>Complete genome sequence of the entomopathogenic and metabolically versatile soil bacterium Pseudomonas entomophila.</title>
        <authorList>
            <person name="Vodovar N."/>
            <person name="Vallenet D."/>
            <person name="Cruveiller S."/>
            <person name="Rouy Z."/>
            <person name="Barbe V."/>
            <person name="Acosta C."/>
            <person name="Cattolico L."/>
            <person name="Jubin C."/>
            <person name="Lajus A."/>
            <person name="Segurens B."/>
            <person name="Vacherie B."/>
            <person name="Wincker P."/>
            <person name="Weissenbach J."/>
            <person name="Lemaitre B."/>
            <person name="Medigue C."/>
            <person name="Boccard F."/>
        </authorList>
    </citation>
    <scope>NUCLEOTIDE SEQUENCE [LARGE SCALE GENOMIC DNA]</scope>
    <source>
        <strain>L48</strain>
    </source>
</reference>
<dbReference type="EC" id="2.3.1.15" evidence="1"/>
<dbReference type="EMBL" id="CT573326">
    <property type="protein sequence ID" value="CAK16925.1"/>
    <property type="molecule type" value="Genomic_DNA"/>
</dbReference>
<dbReference type="RefSeq" id="WP_011535296.1">
    <property type="nucleotide sequence ID" value="NC_008027.1"/>
</dbReference>
<dbReference type="SMR" id="Q1I610"/>
<dbReference type="STRING" id="384676.PSEEN4236"/>
<dbReference type="GeneID" id="32807243"/>
<dbReference type="KEGG" id="pen:PSEEN4236"/>
<dbReference type="eggNOG" id="COG2937">
    <property type="taxonomic scope" value="Bacteria"/>
</dbReference>
<dbReference type="HOGENOM" id="CLU_015407_0_0_6"/>
<dbReference type="OrthoDB" id="335193at2"/>
<dbReference type="UniPathway" id="UPA00557">
    <property type="reaction ID" value="UER00612"/>
</dbReference>
<dbReference type="Proteomes" id="UP000000658">
    <property type="component" value="Chromosome"/>
</dbReference>
<dbReference type="GO" id="GO:0005886">
    <property type="term" value="C:plasma membrane"/>
    <property type="evidence" value="ECO:0007669"/>
    <property type="project" value="UniProtKB-SubCell"/>
</dbReference>
<dbReference type="GO" id="GO:0004366">
    <property type="term" value="F:glycerol-3-phosphate O-acyltransferase activity"/>
    <property type="evidence" value="ECO:0007669"/>
    <property type="project" value="UniProtKB-UniRule"/>
</dbReference>
<dbReference type="GO" id="GO:0016024">
    <property type="term" value="P:CDP-diacylglycerol biosynthetic process"/>
    <property type="evidence" value="ECO:0007669"/>
    <property type="project" value="UniProtKB-UniRule"/>
</dbReference>
<dbReference type="GO" id="GO:0006631">
    <property type="term" value="P:fatty acid metabolic process"/>
    <property type="evidence" value="ECO:0007669"/>
    <property type="project" value="TreeGrafter"/>
</dbReference>
<dbReference type="CDD" id="cd07993">
    <property type="entry name" value="LPLAT_DHAPAT-like"/>
    <property type="match status" value="1"/>
</dbReference>
<dbReference type="HAMAP" id="MF_00393">
    <property type="entry name" value="Glyc3P_acyltrans"/>
    <property type="match status" value="1"/>
</dbReference>
<dbReference type="InterPro" id="IPR022284">
    <property type="entry name" value="GPAT/DHAPAT"/>
</dbReference>
<dbReference type="InterPro" id="IPR045520">
    <property type="entry name" value="GPAT/DHAPAT_C"/>
</dbReference>
<dbReference type="InterPro" id="IPR041728">
    <property type="entry name" value="GPAT/DHAPAT_LPLAT"/>
</dbReference>
<dbReference type="InterPro" id="IPR028354">
    <property type="entry name" value="GPAT_PlsB"/>
</dbReference>
<dbReference type="InterPro" id="IPR002123">
    <property type="entry name" value="Plipid/glycerol_acylTrfase"/>
</dbReference>
<dbReference type="NCBIfam" id="TIGR03703">
    <property type="entry name" value="plsB"/>
    <property type="match status" value="1"/>
</dbReference>
<dbReference type="NCBIfam" id="NF003441">
    <property type="entry name" value="PRK04974.1"/>
    <property type="match status" value="1"/>
</dbReference>
<dbReference type="PANTHER" id="PTHR12563:SF17">
    <property type="entry name" value="DIHYDROXYACETONE PHOSPHATE ACYLTRANSFERASE"/>
    <property type="match status" value="1"/>
</dbReference>
<dbReference type="PANTHER" id="PTHR12563">
    <property type="entry name" value="GLYCEROL-3-PHOSPHATE ACYLTRANSFERASE"/>
    <property type="match status" value="1"/>
</dbReference>
<dbReference type="Pfam" id="PF01553">
    <property type="entry name" value="Acyltransferase"/>
    <property type="match status" value="1"/>
</dbReference>
<dbReference type="Pfam" id="PF19277">
    <property type="entry name" value="GPAT_C"/>
    <property type="match status" value="1"/>
</dbReference>
<dbReference type="PIRSF" id="PIRSF500064">
    <property type="entry name" value="GPAT"/>
    <property type="match status" value="1"/>
</dbReference>
<dbReference type="PIRSF" id="PIRSF000437">
    <property type="entry name" value="GPAT_DHAPAT"/>
    <property type="match status" value="1"/>
</dbReference>
<dbReference type="SMART" id="SM00563">
    <property type="entry name" value="PlsC"/>
    <property type="match status" value="1"/>
</dbReference>
<dbReference type="SUPFAM" id="SSF69593">
    <property type="entry name" value="Glycerol-3-phosphate (1)-acyltransferase"/>
    <property type="match status" value="1"/>
</dbReference>
<comment type="catalytic activity">
    <reaction evidence="1">
        <text>sn-glycerol 3-phosphate + an acyl-CoA = a 1-acyl-sn-glycero-3-phosphate + CoA</text>
        <dbReference type="Rhea" id="RHEA:15325"/>
        <dbReference type="ChEBI" id="CHEBI:57287"/>
        <dbReference type="ChEBI" id="CHEBI:57597"/>
        <dbReference type="ChEBI" id="CHEBI:57970"/>
        <dbReference type="ChEBI" id="CHEBI:58342"/>
        <dbReference type="EC" id="2.3.1.15"/>
    </reaction>
</comment>
<comment type="pathway">
    <text evidence="1">Phospholipid metabolism; CDP-diacylglycerol biosynthesis; CDP-diacylglycerol from sn-glycerol 3-phosphate: step 1/3.</text>
</comment>
<comment type="subcellular location">
    <subcellularLocation>
        <location evidence="1">Cell inner membrane</location>
        <topology evidence="1">Peripheral membrane protein</topology>
        <orientation evidence="1">Cytoplasmic side</orientation>
    </subcellularLocation>
</comment>
<comment type="domain">
    <text evidence="1">The HXXXXD motif is essential for acyltransferase activity and may constitute the binding site for the phosphate moiety of the glycerol-3-phosphate.</text>
</comment>
<comment type="similarity">
    <text evidence="1">Belongs to the GPAT/DAPAT family.</text>
</comment>
<name>PLSB_PSEE4</name>
<sequence length="828" mass="94000">MTRSPLRRLIFGALRRVLYLWVRSETINQSSLTLKLDRSRPVFYALSSPSLTDLAVVDHECTKAGLPRPVLPVAVGPLQEPAGFFYLTPDPDWLGRQDKRGAPPTLERLVAAISQHAEEDTQIIPVSVFWGQTPASESSPWKLLFADSWAVTGRLRRLLSVLILGRKTRVQFSAPIHLRELVDHNKGHERTVRMAQRVMRVHFRNLKTAVIGPDISHRRNLVKGLVHDPLVRQAISDEAEREKIPYAKAEAKALHYGNEIASDYTYTAIRFLEVVLSWFWNKIYDGVKVNHIEQVQGIAPGHEVIYVPCHRSHIDYLLLSYLLFRNGLTPPHIAAGINLNMPVIGGLLRRGGAFFMRRTFKGNPLYTAVFNEYLHTLFTKGFPVEYFVEGGRSRTGRMLQPRTGMLAITLRSFLRSSRTPIVFVPVYIGYERVLEGRTYLGELRGASKKKESIFDIFKVIGALKQRFGQVYVNFGEPIRLAGFLDEQQPGWREQELGPQFRPTWLNETTTRLGETVARHLNEAAAINPVNLVALALLSTSRLALDERALTRVLDLYLALLRQVPYSPHTTLPEGDGQALIKHVLGMDLLAEQKDAMGRILYLDEANAVLMTYYRNNVLHIFALPGLLASFFLSSSRMSRDLLGQYVRALYPYLQAELFLRWTPEQLDEVIDQWLAALVSQGLLRQENDIYMRPAPSSRQFVLLTLLARTITQTLQRFYMATSLLLNSGQHTLSAEELEELCVMMAQRLSILHGLNAPEFFDKTLFRHFIQTLVREGVLQPDGDGKLGYHDKLAELAEGVAKRVLSAELRLSIRQVALHRDEPQENPET</sequence>
<proteinExistence type="inferred from homology"/>
<keyword id="KW-0012">Acyltransferase</keyword>
<keyword id="KW-0997">Cell inner membrane</keyword>
<keyword id="KW-1003">Cell membrane</keyword>
<keyword id="KW-0444">Lipid biosynthesis</keyword>
<keyword id="KW-0443">Lipid metabolism</keyword>
<keyword id="KW-0472">Membrane</keyword>
<keyword id="KW-0594">Phospholipid biosynthesis</keyword>
<keyword id="KW-1208">Phospholipid metabolism</keyword>
<keyword id="KW-0808">Transferase</keyword>
<organism>
    <name type="scientific">Pseudomonas entomophila (strain L48)</name>
    <dbReference type="NCBI Taxonomy" id="384676"/>
    <lineage>
        <taxon>Bacteria</taxon>
        <taxon>Pseudomonadati</taxon>
        <taxon>Pseudomonadota</taxon>
        <taxon>Gammaproteobacteria</taxon>
        <taxon>Pseudomonadales</taxon>
        <taxon>Pseudomonadaceae</taxon>
        <taxon>Pseudomonas</taxon>
    </lineage>
</organism>
<feature type="chain" id="PRO_1000049444" description="Glycerol-3-phosphate acyltransferase">
    <location>
        <begin position="1"/>
        <end position="828"/>
    </location>
</feature>
<feature type="short sequence motif" description="HXXXXD motif">
    <location>
        <begin position="309"/>
        <end position="314"/>
    </location>
</feature>